<name>PA2BB_CRODU</name>
<reference key="1">
    <citation type="journal article" date="2011" name="J. Mol. Biol.">
        <title>Crystal structure of crotoxin reveals key residues involved in the stability and toxicity of this potent heterodimeric beta-neurotoxin.</title>
        <authorList>
            <person name="Faure G."/>
            <person name="Xu H."/>
            <person name="Saul F.A."/>
        </authorList>
    </citation>
    <scope>PROTEIN SEQUENCE</scope>
    <scope>X-RAY CRYSTALLOGRAPHY (1.35 ANGSTROMS) IN COMPLEX WITH CROTOXIN CA2 SUBUNIT</scope>
    <scope>SITES</scope>
    <scope>DISULFIDE BONDS</scope>
    <source>
        <tissue>Venom</tissue>
    </source>
</reference>
<reference key="2">
    <citation type="journal article" date="1993" name="Eur. J. Biochem.">
        <title>Comparison of crotoxin isoforms reveals that stability of the complex plays a major role in its pharmacological action.</title>
        <authorList>
            <person name="Faure G."/>
            <person name="Harvey A.L."/>
            <person name="Thomson E."/>
            <person name="Saliou B."/>
            <person name="Radvanyi F."/>
            <person name="Bon C."/>
        </authorList>
    </citation>
    <scope>BIOPHYSICOCHEMICAL PROPERTIES</scope>
    <scope>SUBUNIT</scope>
    <scope>LETHAL DOSES</scope>
    <source>
        <tissue>Venom</tissue>
    </source>
</reference>
<reference key="3">
    <citation type="journal article" date="1996" name="Biochem. Pharmacol.">
        <title>Regulation of epidermal growth factor receptor activity by crotoxin, a snake venom phospholipase A2 toxin. A novel growth inhibitory mechanism.</title>
        <authorList>
            <person name="Donato N.J."/>
            <person name="Martin C.A."/>
            <person name="Perez M."/>
            <person name="Newman R.A."/>
            <person name="Vidal J.C."/>
            <person name="Etcheverry M."/>
        </authorList>
    </citation>
    <scope>FUNCTION</scope>
</reference>
<reference key="4">
    <citation type="journal article" date="2000" name="Eur. J. Biochem.">
        <title>Interaction of the neurotoxic and nontoxic secretory phospholipases A2 with the crotoxin inhibitor from Crotalus serum.</title>
        <authorList>
            <person name="Faure G."/>
            <person name="Villela C."/>
            <person name="Perales J."/>
            <person name="Bon C."/>
        </authorList>
    </citation>
    <scope>INHIBITION OF CROTOXIN BY CICS</scope>
</reference>
<reference key="5">
    <citation type="journal article" date="2010" name="Toxicon">
        <title>Crotoxin: novel activities for a classic beta-neurotoxin.</title>
        <authorList>
            <person name="Sampaio S.C."/>
            <person name="Hyslop S."/>
            <person name="Fontes M.R."/>
            <person name="Prado-Franceschi J."/>
            <person name="Zambelli V.O."/>
            <person name="Magro A.J."/>
            <person name="Brigatte P."/>
            <person name="Gutierrez V.P."/>
            <person name="Cury Y."/>
        </authorList>
    </citation>
    <scope>REVIEW</scope>
</reference>
<reference key="6">
    <citation type="journal article" date="2016" name="J. Mol. Biol.">
        <title>Rattlesnake phospholipase A2 increases CFTR-chloride channel current and corrects DelF508CFTR dysfunction: impact in cystic fibrosis.</title>
        <authorList>
            <person name="Faure G."/>
            <person name="Bakouh N."/>
            <person name="Lourdel S."/>
            <person name="Odolczyk N."/>
            <person name="Premchandar A."/>
            <person name="Servel N."/>
            <person name="Hatton A."/>
            <person name="Ostrowski M.K."/>
            <person name="Xu H."/>
            <person name="Saul F.A."/>
            <person name="Moquereau C."/>
            <person name="Bitam S."/>
            <person name="Pranke I."/>
            <person name="Planelles G."/>
            <person name="Teulon J."/>
            <person name="Herrmann H."/>
            <person name="Roldan A."/>
            <person name="Zielenkiewicz P."/>
            <person name="Dadlez M."/>
            <person name="Lukacs G.L."/>
            <person name="Sermet-Gaudelus I."/>
            <person name="Ollero M."/>
            <person name="Corringer P.J."/>
            <person name="Edelman A."/>
        </authorList>
    </citation>
    <scope>PHARMACEUTICAL</scope>
</reference>
<dbReference type="EC" id="3.1.1.4"/>
<dbReference type="PDB" id="3R0L">
    <property type="method" value="X-ray"/>
    <property type="resolution" value="1.35 A"/>
    <property type="chains" value="D=1-122"/>
</dbReference>
<dbReference type="PDBsum" id="3R0L"/>
<dbReference type="SMR" id="P0CG56"/>
<dbReference type="ComplexPortal" id="CPX-2467">
    <property type="entry name" value="Crotoxin complex, aCA1/2/4-bCA1-CBb variant"/>
</dbReference>
<dbReference type="ComplexPortal" id="CPX-2468">
    <property type="entry name" value="Crotoxin complex, aCA3-bCA2/3/4-CBb variant"/>
</dbReference>
<dbReference type="ComplexPortal" id="CPX-2751">
    <property type="entry name" value="Crotoxin complex, aCA1/2/4-bCA2/3/4-CBb variant"/>
</dbReference>
<dbReference type="ComplexPortal" id="CPX-2878">
    <property type="entry name" value="Crotoxin complex, aCA3-bCA1-CBb variant"/>
</dbReference>
<dbReference type="SABIO-RK" id="P0CG56"/>
<dbReference type="EvolutionaryTrace" id="P0CG56"/>
<dbReference type="GO" id="GO:0005576">
    <property type="term" value="C:extracellular region"/>
    <property type="evidence" value="ECO:0007669"/>
    <property type="project" value="UniProtKB-SubCell"/>
</dbReference>
<dbReference type="GO" id="GO:0005509">
    <property type="term" value="F:calcium ion binding"/>
    <property type="evidence" value="ECO:0007669"/>
    <property type="project" value="InterPro"/>
</dbReference>
<dbReference type="GO" id="GO:0047498">
    <property type="term" value="F:calcium-dependent phospholipase A2 activity"/>
    <property type="evidence" value="ECO:0007669"/>
    <property type="project" value="TreeGrafter"/>
</dbReference>
<dbReference type="GO" id="GO:0099106">
    <property type="term" value="F:ion channel regulator activity"/>
    <property type="evidence" value="ECO:0007669"/>
    <property type="project" value="UniProtKB-KW"/>
</dbReference>
<dbReference type="GO" id="GO:0005543">
    <property type="term" value="F:phospholipid binding"/>
    <property type="evidence" value="ECO:0007669"/>
    <property type="project" value="TreeGrafter"/>
</dbReference>
<dbReference type="GO" id="GO:0090729">
    <property type="term" value="F:toxin activity"/>
    <property type="evidence" value="ECO:0007669"/>
    <property type="project" value="UniProtKB-KW"/>
</dbReference>
<dbReference type="GO" id="GO:0050482">
    <property type="term" value="P:arachidonate secretion"/>
    <property type="evidence" value="ECO:0007669"/>
    <property type="project" value="InterPro"/>
</dbReference>
<dbReference type="GO" id="GO:0016042">
    <property type="term" value="P:lipid catabolic process"/>
    <property type="evidence" value="ECO:0007669"/>
    <property type="project" value="InterPro"/>
</dbReference>
<dbReference type="GO" id="GO:0042130">
    <property type="term" value="P:negative regulation of T cell proliferation"/>
    <property type="evidence" value="ECO:0007669"/>
    <property type="project" value="TreeGrafter"/>
</dbReference>
<dbReference type="GO" id="GO:0006644">
    <property type="term" value="P:phospholipid metabolic process"/>
    <property type="evidence" value="ECO:0007669"/>
    <property type="project" value="InterPro"/>
</dbReference>
<dbReference type="CDD" id="cd00125">
    <property type="entry name" value="PLA2c"/>
    <property type="match status" value="1"/>
</dbReference>
<dbReference type="FunFam" id="1.20.90.10:FF:000001">
    <property type="entry name" value="Basic phospholipase A2 homolog"/>
    <property type="match status" value="1"/>
</dbReference>
<dbReference type="Gene3D" id="1.20.90.10">
    <property type="entry name" value="Phospholipase A2 domain"/>
    <property type="match status" value="1"/>
</dbReference>
<dbReference type="InterPro" id="IPR001211">
    <property type="entry name" value="PLipase_A2"/>
</dbReference>
<dbReference type="InterPro" id="IPR033112">
    <property type="entry name" value="PLipase_A2_Asp_AS"/>
</dbReference>
<dbReference type="InterPro" id="IPR016090">
    <property type="entry name" value="PLipase_A2_dom"/>
</dbReference>
<dbReference type="InterPro" id="IPR036444">
    <property type="entry name" value="PLipase_A2_dom_sf"/>
</dbReference>
<dbReference type="InterPro" id="IPR033113">
    <property type="entry name" value="PLipase_A2_His_AS"/>
</dbReference>
<dbReference type="PANTHER" id="PTHR11716">
    <property type="entry name" value="PHOSPHOLIPASE A2 FAMILY MEMBER"/>
    <property type="match status" value="1"/>
</dbReference>
<dbReference type="PANTHER" id="PTHR11716:SF9">
    <property type="entry name" value="PHOSPHOLIPASE A2, MEMBRANE ASSOCIATED"/>
    <property type="match status" value="1"/>
</dbReference>
<dbReference type="Pfam" id="PF00068">
    <property type="entry name" value="Phospholip_A2_1"/>
    <property type="match status" value="1"/>
</dbReference>
<dbReference type="PRINTS" id="PR00389">
    <property type="entry name" value="PHPHLIPASEA2"/>
</dbReference>
<dbReference type="SMART" id="SM00085">
    <property type="entry name" value="PA2c"/>
    <property type="match status" value="1"/>
</dbReference>
<dbReference type="SUPFAM" id="SSF48619">
    <property type="entry name" value="Phospholipase A2, PLA2"/>
    <property type="match status" value="1"/>
</dbReference>
<dbReference type="PROSITE" id="PS00119">
    <property type="entry name" value="PA2_ASP"/>
    <property type="match status" value="1"/>
</dbReference>
<dbReference type="PROSITE" id="PS00118">
    <property type="entry name" value="PA2_HIS"/>
    <property type="match status" value="1"/>
</dbReference>
<organism>
    <name type="scientific">Crotalus durissus terrificus</name>
    <name type="common">South American rattlesnake</name>
    <dbReference type="NCBI Taxonomy" id="8732"/>
    <lineage>
        <taxon>Eukaryota</taxon>
        <taxon>Metazoa</taxon>
        <taxon>Chordata</taxon>
        <taxon>Craniata</taxon>
        <taxon>Vertebrata</taxon>
        <taxon>Euteleostomi</taxon>
        <taxon>Lepidosauria</taxon>
        <taxon>Squamata</taxon>
        <taxon>Bifurcata</taxon>
        <taxon>Unidentata</taxon>
        <taxon>Episquamata</taxon>
        <taxon>Toxicofera</taxon>
        <taxon>Serpentes</taxon>
        <taxon>Colubroidea</taxon>
        <taxon>Viperidae</taxon>
        <taxon>Crotalinae</taxon>
        <taxon>Crotalus</taxon>
    </lineage>
</organism>
<sequence>HLLQFNKMIKFETRKNAVPFYAFYGCYCGWGGQGRPKDATDRCCFVHDCCYGKLAKCNTKWDIYRYSLKSGYITCGKGTWCEEQICECDRVAAECLRRSLSTYKNGYMFYPDSRCRGPSETC</sequence>
<keyword id="KW-0002">3D-structure</keyword>
<keyword id="KW-1203">Blood coagulation cascade inhibiting toxin</keyword>
<keyword id="KW-0106">Calcium</keyword>
<keyword id="KW-0903">Direct protein sequencing</keyword>
<keyword id="KW-1015">Disulfide bond</keyword>
<keyword id="KW-1199">Hemostasis impairing toxin</keyword>
<keyword id="KW-0378">Hydrolase</keyword>
<keyword id="KW-0872">Ion channel impairing toxin</keyword>
<keyword id="KW-0479">Metal-binding</keyword>
<keyword id="KW-0582">Pharmaceutical</keyword>
<keyword id="KW-0964">Secreted</keyword>
<keyword id="KW-0800">Toxin</keyword>
<protein>
    <recommendedName>
        <fullName>Phospholipase A2 crotoxin basic subunit CBb</fullName>
        <shortName>CTX subunit CBb</shortName>
        <shortName>svPLA2</shortName>
        <ecNumber>3.1.1.4</ecNumber>
    </recommendedName>
    <alternativeName>
        <fullName>Phosphatidylcholine 2-acylhydrolase</fullName>
    </alternativeName>
</protein>
<accession>P0CG56</accession>
<evidence type="ECO:0000250" key="1"/>
<evidence type="ECO:0000250" key="2">
    <source>
        <dbReference type="UniProtKB" id="P62022"/>
    </source>
</evidence>
<evidence type="ECO:0000269" key="3">
    <source>
    </source>
</evidence>
<evidence type="ECO:0000269" key="4">
    <source>
    </source>
</evidence>
<evidence type="ECO:0000269" key="5">
    <source>
    </source>
</evidence>
<evidence type="ECO:0000269" key="6">
    <source>
    </source>
</evidence>
<evidence type="ECO:0000269" key="7">
    <source>
    </source>
</evidence>
<evidence type="ECO:0000305" key="8"/>
<evidence type="ECO:0000305" key="9">
    <source>
    </source>
</evidence>
<evidence type="ECO:0000305" key="10">
    <source>
    </source>
</evidence>
<evidence type="ECO:0007744" key="11">
    <source>
        <dbReference type="PDB" id="3R0L"/>
    </source>
</evidence>
<evidence type="ECO:0007829" key="12">
    <source>
        <dbReference type="PDB" id="3R0L"/>
    </source>
</evidence>
<comment type="function">
    <text evidence="3 7">Heterodimer CA-CB: Crotoxin is a potent presynaptic neurotoxin that possesses phospholipase A2 (PLA2) activity and exerts a lethal action by blocking neuromuscular transmission. It consists of a non-covalent association of a basic and weakly toxic PLA2 subunit (CBa2, CBb, CBc, or CBd), with a small acidic, non-enzymatic and non-toxic subunit (CA1, CA2, CA3 or CA4). The complex acts by binding to a specific 48-kDa protein (R48) receptor located on presynaptic membranes, forming a transient ternary complex CA-CB-R48, followed by dissociation of the CA-CB complex and release of the CA subunit. At equilibrium, only the CB subunits remain associated with the specific crotoxin receptor. In addition to neurotoxicity, crotoxin has been found to exert myotoxicity, nephrotoxicity, and cardiovascular toxicity (PubMed:20109480). Moreover, anti-inflammatory, immunomodulatory, anti-tumor and analgesic effects of crotoxin have also been reported (PubMed:20109480).</text>
</comment>
<comment type="function">
    <text evidence="5">Monomer CBb: The basic subunit of crotoxin is a snake venom phospholipase A2 (PLA2) that exhibits weak neurotoxicity (10-fold less than the heterodimer) and strong anticoagulant effects by binding to factor Xa (F10) and inhibiting the prothrombinase activity. In addition, it shows the same effects described for the heterodimer and binds the nucleotide-binding domain (NBD1) of CFTR chloride channels and increases the channel current (PubMed:27241308). PLA2 catalyzes the calcium-dependent hydrolysis of the 2-acyl groups in 3-sn-phosphoglycerides.</text>
</comment>
<comment type="catalytic activity">
    <reaction>
        <text>a 1,2-diacyl-sn-glycero-3-phosphocholine + H2O = a 1-acyl-sn-glycero-3-phosphocholine + a fatty acid + H(+)</text>
        <dbReference type="Rhea" id="RHEA:15801"/>
        <dbReference type="ChEBI" id="CHEBI:15377"/>
        <dbReference type="ChEBI" id="CHEBI:15378"/>
        <dbReference type="ChEBI" id="CHEBI:28868"/>
        <dbReference type="ChEBI" id="CHEBI:57643"/>
        <dbReference type="ChEBI" id="CHEBI:58168"/>
        <dbReference type="EC" id="3.1.1.4"/>
    </reaction>
</comment>
<comment type="cofactor">
    <cofactor evidence="2">
        <name>Ca(2+)</name>
        <dbReference type="ChEBI" id="CHEBI:29108"/>
    </cofactor>
    <text evidence="2">Binds 1 Ca(2+) ion.</text>
</comment>
<comment type="biophysicochemical properties">
    <kinetics>
        <KM evidence="6">0.07 uM for 1-palmitoyl-2-(10-pyrenyldecanoyl)-sn-glycero-3-monomethyl phosphatidic acid (monomer CBb)</KM>
        <KM evidence="6">0.3 uM for 1-palmitoyl-2-(10-pyrenyldecanoyl)-sn-glycero-3-monomethyl phosphatidic acid (class 2 heterodimer CA2-CBb)</KM>
        <KM evidence="6">0.2 uM for 1-palmitoyl-2-(10-pyrenyldecanoyl)-sn-glycero-3-monomethyl phosphatidic acid (class 2 heterodimer CA3-CBb)</KM>
        <Vmax evidence="6">22.0 umol/min/mg enzyme (monomer CBb)</Vmax>
        <Vmax evidence="6">10.0 umol/min/mg enzyme (class 2 heterodimer CA2-CBb)</Vmax>
        <Vmax evidence="6">9.0 umol/min/mg enzyme (class 2 heterodimer CA3-CBb)</Vmax>
    </kinetics>
</comment>
<comment type="subunit">
    <text evidence="4 6">Heterodimer of one of the acidic (CA1, CA2, CA3 or CA4) and one of the basic (CBa1, CBa2, CBb, CBc or CBd) subunits; non-covalently linked. The acidic subunit is non-toxic, without enzymatic activity and comprises 3 peptides that are cross-linked by 5 disulfide bridges. The basic subunit is toxic, has phospholipase A2 activity and is composed of a single chain. Multiple variants of each subunit give different crotoxin complexes that can be subdivided into 2 classes: (1) those of high toxicity, low PLA2 activity (CBb, CBc and CBd linked with high affinity to any CA) and high stability (K(d)=4.5 nM) and (2) those of moderate toxicity, high PLA2 activity (CBa2 linked with low affinity to any CA) and low stability (K(d)=25 nM).</text>
</comment>
<comment type="subcellular location">
    <subcellularLocation>
        <location>Secreted</location>
    </subcellularLocation>
</comment>
<comment type="tissue specificity">
    <text>Expressed by the venom gland.</text>
</comment>
<comment type="toxic dose">
    <text evidence="6">In monomer CBb, LD(50) is 500 ug/kg by intravenous injection into mice.</text>
</comment>
<comment type="toxic dose">
    <text evidence="6">In class 1 heterodimer CA2-CBb, LD(50) is 110 ug/kg by intravenous injection into mice.</text>
</comment>
<comment type="toxic dose">
    <text evidence="6">In class 1 heterodimer CA3-CBb, LD(50) is 95 ug/kg by intravenous injection into mice.</text>
</comment>
<comment type="pharmaceutical">
    <text evidence="10">May be used to develop new agents to treat the most common mutation of cystic fibrosis (DelF508CFTR). It shows a double function: (i) as a potentiator, by increasing the chloride channel current, and (ii) as a corrector, by permitting DelF508CFTR to escape from the degradation pathway, facilitating its biosynthesis and subsequent delivery to the plasma membrane.</text>
</comment>
<comment type="miscellaneous">
    <text evidence="1 9">The crotoxin heterodimer is inhibited by the crotoxin inhibitor from Crotalus serum (CICS). CICS neutralizes the lethal potency of crotoxin and inhibits its PLA2 activity. CICS only binds tightly to the CB subunit and induces the dissociation of the heterodimer (By similarity). Tested on the CA2-CBd heterodimer (PubMed:10903514).</text>
</comment>
<comment type="similarity">
    <text evidence="8">Belongs to the phospholipase A2 family. Group II subfamily. D49 sub-subfamily.</text>
</comment>
<feature type="chain" id="PRO_0000420455" description="Phospholipase A2 crotoxin basic subunit CBb">
    <location>
        <begin position="1"/>
        <end position="122"/>
    </location>
</feature>
<feature type="region of interest" description="Putative region that binds to the R48 receptor (PubMed:21787789)" evidence="4">
    <location>
        <begin position="61"/>
        <end status="unknown"/>
    </location>
</feature>
<feature type="active site" evidence="2">
    <location>
        <position position="47"/>
    </location>
</feature>
<feature type="active site" evidence="2">
    <location>
        <position position="89"/>
    </location>
</feature>
<feature type="binding site" evidence="2">
    <location>
        <position position="27"/>
    </location>
    <ligand>
        <name>Ca(2+)</name>
        <dbReference type="ChEBI" id="CHEBI:29108"/>
    </ligand>
</feature>
<feature type="binding site" evidence="2">
    <location>
        <position position="29"/>
    </location>
    <ligand>
        <name>Ca(2+)</name>
        <dbReference type="ChEBI" id="CHEBI:29108"/>
    </ligand>
</feature>
<feature type="binding site" evidence="2">
    <location>
        <position position="31"/>
    </location>
    <ligand>
        <name>Ca(2+)</name>
        <dbReference type="ChEBI" id="CHEBI:29108"/>
    </ligand>
</feature>
<feature type="binding site" evidence="2">
    <location>
        <position position="48"/>
    </location>
    <ligand>
        <name>Ca(2+)</name>
        <dbReference type="ChEBI" id="CHEBI:29108"/>
    </ligand>
</feature>
<feature type="site" description="Important for stability and high toxicity" evidence="4">
    <location>
        <position position="1"/>
    </location>
</feature>
<feature type="site" description="Putative interfacial binding surface (IBS)" evidence="4">
    <location>
        <position position="2"/>
    </location>
</feature>
<feature type="site" description="Putative interfacial binding surface (IBS)" evidence="4">
    <location>
        <position position="3"/>
    </location>
</feature>
<feature type="site" description="Putative interfacial binding surface (IBS)" evidence="4">
    <location>
        <position position="7"/>
    </location>
</feature>
<feature type="site" description="Putative interfacial binding surface (IBS)" evidence="4">
    <location>
        <position position="10"/>
    </location>
</feature>
<feature type="site" description="Binds Q-49 of CBa2" evidence="4">
    <location>
        <position position="14"/>
    </location>
</feature>
<feature type="site" description="Binds G-45 of CBa2" evidence="4">
    <location>
        <position position="16"/>
    </location>
</feature>
<feature type="site" description="Putative interfacial binding surface (IBS)" evidence="4">
    <location>
        <position position="17"/>
    </location>
</feature>
<feature type="site" description="Binds G-45 of CBa2" evidence="4">
    <location>
        <position position="18"/>
    </location>
</feature>
<feature type="site" description="Binds Y-43 of CBa2" evidence="4">
    <location>
        <position position="18"/>
    </location>
</feature>
<feature type="site" description="Putative interfacial binding surface (IBS)" evidence="4">
    <location>
        <position position="18"/>
    </location>
</feature>
<feature type="site" description="Putative interfacial binding surface (IBS)" evidence="4">
    <location>
        <position position="22"/>
    </location>
</feature>
<feature type="site" description="Putative interfacial binding surface (IBS)" evidence="4">
    <location>
        <position position="23"/>
    </location>
</feature>
<feature type="site" description="Binds D-105 of CBa2, important for stability (T-31)" evidence="4">
    <location>
        <position position="30"/>
    </location>
</feature>
<feature type="site" description="Binds E-93 of CBa2" evidence="4">
    <location>
        <position position="31"/>
    </location>
</feature>
<feature type="site" description="Putative interfacial binding surface (IBS)" evidence="4">
    <location>
        <position position="60"/>
    </location>
</feature>
<feature type="site" description="Binds D-95 of CBa2, important for stability (T-70)" evidence="4">
    <location>
        <position position="61"/>
    </location>
</feature>
<feature type="site" description="Putative interfacial binding surface (IBS)" evidence="4">
    <location>
        <position position="103"/>
    </location>
</feature>
<feature type="disulfide bond" evidence="4 11">
    <location>
        <begin position="26"/>
        <end position="115"/>
    </location>
</feature>
<feature type="disulfide bond" evidence="4 11">
    <location>
        <begin position="28"/>
        <end position="44"/>
    </location>
</feature>
<feature type="disulfide bond" evidence="4 11">
    <location>
        <begin position="43"/>
        <end position="95"/>
    </location>
</feature>
<feature type="disulfide bond" evidence="4 11">
    <location>
        <begin position="49"/>
        <end position="122"/>
    </location>
</feature>
<feature type="disulfide bond" evidence="4 11">
    <location>
        <begin position="50"/>
        <end position="88"/>
    </location>
</feature>
<feature type="disulfide bond" evidence="4 11">
    <location>
        <begin position="57"/>
        <end position="81"/>
    </location>
</feature>
<feature type="disulfide bond" evidence="4 11">
    <location>
        <begin position="75"/>
        <end position="86"/>
    </location>
</feature>
<feature type="helix" evidence="12">
    <location>
        <begin position="2"/>
        <end position="13"/>
    </location>
</feature>
<feature type="helix" evidence="12">
    <location>
        <begin position="17"/>
        <end position="20"/>
    </location>
</feature>
<feature type="turn" evidence="12">
    <location>
        <begin position="25"/>
        <end position="27"/>
    </location>
</feature>
<feature type="strand" evidence="12">
    <location>
        <begin position="28"/>
        <end position="30"/>
    </location>
</feature>
<feature type="helix" evidence="12">
    <location>
        <begin position="39"/>
        <end position="52"/>
    </location>
</feature>
<feature type="turn" evidence="12">
    <location>
        <begin position="53"/>
        <end position="56"/>
    </location>
</feature>
<feature type="turn" evidence="12">
    <location>
        <begin position="59"/>
        <end position="61"/>
    </location>
</feature>
<feature type="strand" evidence="12">
    <location>
        <begin position="66"/>
        <end position="68"/>
    </location>
</feature>
<feature type="strand" evidence="12">
    <location>
        <begin position="70"/>
        <end position="75"/>
    </location>
</feature>
<feature type="helix" evidence="12">
    <location>
        <begin position="80"/>
        <end position="98"/>
    </location>
</feature>
<feature type="helix" evidence="12">
    <location>
        <begin position="100"/>
        <end position="102"/>
    </location>
</feature>
<feature type="helix" evidence="12">
    <location>
        <begin position="105"/>
        <end position="107"/>
    </location>
</feature>
<feature type="helix" evidence="12">
    <location>
        <begin position="112"/>
        <end position="114"/>
    </location>
</feature>
<proteinExistence type="evidence at protein level"/>